<feature type="chain" id="PRO_0000328857" description="Zinc finger TRAF-type-containing protein 1-B">
    <location>
        <begin position="1"/>
        <end position="365"/>
    </location>
</feature>
<feature type="zinc finger region" description="RING-type; degenerate" evidence="3">
    <location>
        <begin position="72"/>
        <end position="117"/>
    </location>
</feature>
<feature type="zinc finger region" description="TRAF-type" evidence="4">
    <location>
        <begin position="113"/>
        <end position="186"/>
    </location>
</feature>
<feature type="region of interest" description="Disordered" evidence="5">
    <location>
        <begin position="1"/>
        <end position="56"/>
    </location>
</feature>
<dbReference type="EMBL" id="BC110974">
    <property type="protein sequence ID" value="AAI10975.1"/>
    <property type="status" value="ALT_INIT"/>
    <property type="molecule type" value="mRNA"/>
</dbReference>
<dbReference type="EMBL" id="BC122465">
    <property type="protein sequence ID" value="AAI22466.1"/>
    <property type="molecule type" value="mRNA"/>
</dbReference>
<dbReference type="RefSeq" id="NP_001121149.1">
    <property type="nucleotide sequence ID" value="NM_001127677.1"/>
</dbReference>
<dbReference type="DNASU" id="733442"/>
<dbReference type="GeneID" id="733442"/>
<dbReference type="KEGG" id="xla:733442"/>
<dbReference type="AGR" id="Xenbase:XB-GENE-5917347"/>
<dbReference type="CTD" id="733442"/>
<dbReference type="OMA" id="YHESNEC"/>
<dbReference type="OrthoDB" id="10062218at2759"/>
<dbReference type="Proteomes" id="UP000186698">
    <property type="component" value="Chromosome 6S"/>
</dbReference>
<dbReference type="Bgee" id="733442">
    <property type="expression patterns" value="Expressed in testis and 19 other cell types or tissues"/>
</dbReference>
<dbReference type="GO" id="GO:0005737">
    <property type="term" value="C:cytoplasm"/>
    <property type="evidence" value="ECO:0000250"/>
    <property type="project" value="UniProtKB"/>
</dbReference>
<dbReference type="GO" id="GO:0005635">
    <property type="term" value="C:nuclear envelope"/>
    <property type="evidence" value="ECO:0000250"/>
    <property type="project" value="UniProtKB"/>
</dbReference>
<dbReference type="GO" id="GO:0005634">
    <property type="term" value="C:nucleus"/>
    <property type="evidence" value="ECO:0000318"/>
    <property type="project" value="GO_Central"/>
</dbReference>
<dbReference type="GO" id="GO:0008270">
    <property type="term" value="F:zinc ion binding"/>
    <property type="evidence" value="ECO:0007669"/>
    <property type="project" value="UniProtKB-KW"/>
</dbReference>
<dbReference type="CDD" id="cd22861">
    <property type="entry name" value="CYHR1_C"/>
    <property type="match status" value="1"/>
</dbReference>
<dbReference type="CDD" id="cd16505">
    <property type="entry name" value="RING-HC_CYHR1"/>
    <property type="match status" value="1"/>
</dbReference>
<dbReference type="Gene3D" id="3.30.40.10">
    <property type="entry name" value="Zinc/RING finger domain, C3HC4 (zinc finger)"/>
    <property type="match status" value="2"/>
</dbReference>
<dbReference type="InterPro" id="IPR049548">
    <property type="entry name" value="Sina-like_RING"/>
</dbReference>
<dbReference type="InterPro" id="IPR039338">
    <property type="entry name" value="ZFTRAF1"/>
</dbReference>
<dbReference type="InterPro" id="IPR001841">
    <property type="entry name" value="Znf_RING"/>
</dbReference>
<dbReference type="InterPro" id="IPR013083">
    <property type="entry name" value="Znf_RING/FYVE/PHD"/>
</dbReference>
<dbReference type="InterPro" id="IPR001293">
    <property type="entry name" value="Znf_TRAF"/>
</dbReference>
<dbReference type="PANTHER" id="PTHR23059">
    <property type="entry name" value="CYSTEINE AND HISTIDINE-RICH PROTEIN 1"/>
    <property type="match status" value="1"/>
</dbReference>
<dbReference type="PANTHER" id="PTHR23059:SF4">
    <property type="entry name" value="ZINC FINGER TRAF-TYPE-CONTAINING PROTEIN 1"/>
    <property type="match status" value="1"/>
</dbReference>
<dbReference type="Pfam" id="PF21362">
    <property type="entry name" value="Sina_RING"/>
    <property type="match status" value="1"/>
</dbReference>
<dbReference type="SUPFAM" id="SSF57850">
    <property type="entry name" value="RING/U-box"/>
    <property type="match status" value="1"/>
</dbReference>
<dbReference type="SUPFAM" id="SSF49599">
    <property type="entry name" value="TRAF domain-like"/>
    <property type="match status" value="1"/>
</dbReference>
<dbReference type="PROSITE" id="PS50089">
    <property type="entry name" value="ZF_RING_2"/>
    <property type="match status" value="1"/>
</dbReference>
<dbReference type="PROSITE" id="PS50145">
    <property type="entry name" value="ZF_TRAF"/>
    <property type="match status" value="1"/>
</dbReference>
<accession>Q2TAD9</accession>
<accession>Q0P3T3</accession>
<reference key="1">
    <citation type="submission" date="2005-12" db="EMBL/GenBank/DDBJ databases">
        <authorList>
            <consortium name="NIH - Xenopus Gene Collection (XGC) project"/>
        </authorList>
    </citation>
    <scope>NUCLEOTIDE SEQUENCE [LARGE SCALE MRNA]</scope>
    <source>
        <tissue>Lung</tissue>
        <tissue>Testis</tissue>
    </source>
</reference>
<name>ZFT1B_XENLA</name>
<sequence>MSEEREAPGPLASSSAGLGAEVGQEEVPGGAGPARLLLLPSDSDGPPKKRLRSEAEPGSVRLEERLYSVLCCAVCLDLPKASVYQCTNGHLMCAGCFIHLLADARLKEEQATCPNCRCEISKSLCCRNLAVEKAISELPSDCGFCLKQFPRSLLERHKKEECQDRVTQCKYKRIGCPWQGPYHELTVHESECCHPTKTGNELMEILDEMDQTHKKEMQLYNSIFSLLSFEKIGYTEVQFRPYRTDDFITRLYYETPRFTVLNQTWVLKARVNDSERNPNLSCKRTLSFQLILKSKVNSPMECSFLLLKGPYDDVKIHPVIYQFVFTNENNETEYVPLPIIDSVECNKLLAAKNINLRLFIFQIQK</sequence>
<evidence type="ECO:0000250" key="1">
    <source>
        <dbReference type="UniProtKB" id="P0DTL6"/>
    </source>
</evidence>
<evidence type="ECO:0000250" key="2">
    <source>
        <dbReference type="UniProtKB" id="Q9QXA1"/>
    </source>
</evidence>
<evidence type="ECO:0000255" key="3">
    <source>
        <dbReference type="PROSITE-ProRule" id="PRU00175"/>
    </source>
</evidence>
<evidence type="ECO:0000255" key="4">
    <source>
        <dbReference type="PROSITE-ProRule" id="PRU00207"/>
    </source>
</evidence>
<evidence type="ECO:0000256" key="5">
    <source>
        <dbReference type="SAM" id="MobiDB-lite"/>
    </source>
</evidence>
<evidence type="ECO:0000305" key="6"/>
<proteinExistence type="evidence at transcript level"/>
<organism>
    <name type="scientific">Xenopus laevis</name>
    <name type="common">African clawed frog</name>
    <dbReference type="NCBI Taxonomy" id="8355"/>
    <lineage>
        <taxon>Eukaryota</taxon>
        <taxon>Metazoa</taxon>
        <taxon>Chordata</taxon>
        <taxon>Craniata</taxon>
        <taxon>Vertebrata</taxon>
        <taxon>Euteleostomi</taxon>
        <taxon>Amphibia</taxon>
        <taxon>Batrachia</taxon>
        <taxon>Anura</taxon>
        <taxon>Pipoidea</taxon>
        <taxon>Pipidae</taxon>
        <taxon>Xenopodinae</taxon>
        <taxon>Xenopus</taxon>
        <taxon>Xenopus</taxon>
    </lineage>
</organism>
<keyword id="KW-0963">Cytoplasm</keyword>
<keyword id="KW-0479">Metal-binding</keyword>
<keyword id="KW-1185">Reference proteome</keyword>
<keyword id="KW-0862">Zinc</keyword>
<keyword id="KW-0863">Zinc-finger</keyword>
<comment type="subunit">
    <text evidence="2">Interacts with LGALS3.</text>
</comment>
<comment type="subcellular location">
    <subcellularLocation>
        <location evidence="2">Cytoplasm</location>
    </subcellularLocation>
</comment>
<comment type="similarity">
    <text evidence="6">Belongs to the ZFTRAF1 family.</text>
</comment>
<comment type="sequence caution" evidence="6">
    <conflict type="erroneous initiation">
        <sequence resource="EMBL-CDS" id="AAI10975"/>
    </conflict>
    <text>Extended N-terminus.</text>
</comment>
<protein>
    <recommendedName>
        <fullName evidence="1">Zinc finger TRAF-type-containing protein 1-B</fullName>
    </recommendedName>
    <alternativeName>
        <fullName>Cysteine and histidine-rich protein 1-B</fullName>
    </alternativeName>
</protein>
<gene>
    <name evidence="1" type="primary">zftraf1-b</name>
    <name type="synonym">cyhr1-b</name>
</gene>